<comment type="similarity">
    <text evidence="1">Belongs to the UPF0145 family.</text>
</comment>
<organism>
    <name type="scientific">Acidothermus cellulolyticus (strain ATCC 43068 / DSM 8971 / 11B)</name>
    <dbReference type="NCBI Taxonomy" id="351607"/>
    <lineage>
        <taxon>Bacteria</taxon>
        <taxon>Bacillati</taxon>
        <taxon>Actinomycetota</taxon>
        <taxon>Actinomycetes</taxon>
        <taxon>Acidothermales</taxon>
        <taxon>Acidothermaceae</taxon>
        <taxon>Acidothermus</taxon>
    </lineage>
</organism>
<keyword id="KW-1185">Reference proteome</keyword>
<dbReference type="EMBL" id="CP000481">
    <property type="protein sequence ID" value="ABK53881.1"/>
    <property type="molecule type" value="Genomic_DNA"/>
</dbReference>
<dbReference type="RefSeq" id="WP_011720944.1">
    <property type="nucleotide sequence ID" value="NC_008578.1"/>
</dbReference>
<dbReference type="SMR" id="A0LWS1"/>
<dbReference type="KEGG" id="ace:Acel_2109"/>
<dbReference type="eggNOG" id="COG0393">
    <property type="taxonomic scope" value="Bacteria"/>
</dbReference>
<dbReference type="HOGENOM" id="CLU_117144_1_1_11"/>
<dbReference type="InParanoid" id="A0LWS1"/>
<dbReference type="OrthoDB" id="9796448at2"/>
<dbReference type="Proteomes" id="UP000008221">
    <property type="component" value="Chromosome"/>
</dbReference>
<dbReference type="Gene3D" id="3.30.110.70">
    <property type="entry name" value="Hypothetical protein apc22750. Chain B"/>
    <property type="match status" value="1"/>
</dbReference>
<dbReference type="HAMAP" id="MF_00338">
    <property type="entry name" value="UPF0145"/>
    <property type="match status" value="1"/>
</dbReference>
<dbReference type="InterPro" id="IPR035439">
    <property type="entry name" value="UPF0145_dom_sf"/>
</dbReference>
<dbReference type="InterPro" id="IPR002765">
    <property type="entry name" value="UPF0145_YbjQ-like"/>
</dbReference>
<dbReference type="PANTHER" id="PTHR34068:SF2">
    <property type="entry name" value="UPF0145 PROTEIN SCO3412"/>
    <property type="match status" value="1"/>
</dbReference>
<dbReference type="PANTHER" id="PTHR34068">
    <property type="entry name" value="UPF0145 PROTEIN YBJQ"/>
    <property type="match status" value="1"/>
</dbReference>
<dbReference type="Pfam" id="PF01906">
    <property type="entry name" value="YbjQ_1"/>
    <property type="match status" value="1"/>
</dbReference>
<dbReference type="SUPFAM" id="SSF117782">
    <property type="entry name" value="YbjQ-like"/>
    <property type="match status" value="1"/>
</dbReference>
<gene>
    <name type="ordered locus">Acel_2109</name>
</gene>
<protein>
    <recommendedName>
        <fullName evidence="1">UPF0145 protein Acel_2109</fullName>
    </recommendedName>
</protein>
<proteinExistence type="inferred from homology"/>
<name>Y2109_ACIC1</name>
<sequence length="108" mass="11755">MLIVTTNEIPGYRIDEILGSVWGLTVRSRNIVSQFGAGLKSIFGGELRGMTTVLIDSRNQAMQRLVEEATARGANAILAMRFDTSEIGGMWTEICAYGTAARVSRLNS</sequence>
<feature type="chain" id="PRO_1000119975" description="UPF0145 protein Acel_2109">
    <location>
        <begin position="1"/>
        <end position="108"/>
    </location>
</feature>
<evidence type="ECO:0000255" key="1">
    <source>
        <dbReference type="HAMAP-Rule" id="MF_00338"/>
    </source>
</evidence>
<reference key="1">
    <citation type="journal article" date="2009" name="Genome Res.">
        <title>Complete genome of the cellulolytic thermophile Acidothermus cellulolyticus 11B provides insights into its ecophysiological and evolutionary adaptations.</title>
        <authorList>
            <person name="Barabote R.D."/>
            <person name="Xie G."/>
            <person name="Leu D.H."/>
            <person name="Normand P."/>
            <person name="Necsulea A."/>
            <person name="Daubin V."/>
            <person name="Medigue C."/>
            <person name="Adney W.S."/>
            <person name="Xu X.C."/>
            <person name="Lapidus A."/>
            <person name="Parales R.E."/>
            <person name="Detter C."/>
            <person name="Pujic P."/>
            <person name="Bruce D."/>
            <person name="Lavire C."/>
            <person name="Challacombe J.F."/>
            <person name="Brettin T.S."/>
            <person name="Berry A.M."/>
        </authorList>
    </citation>
    <scope>NUCLEOTIDE SEQUENCE [LARGE SCALE GENOMIC DNA]</scope>
    <source>
        <strain>ATCC 43068 / DSM 8971 / 11B</strain>
    </source>
</reference>
<accession>A0LWS1</accession>